<keyword id="KW-0963">Cytoplasm</keyword>
<keyword id="KW-0903">Direct protein sequencing</keyword>
<keyword id="KW-0349">Heme</keyword>
<keyword id="KW-0408">Iron</keyword>
<keyword id="KW-0479">Metal-binding</keyword>
<keyword id="KW-0514">Muscle protein</keyword>
<keyword id="KW-0560">Oxidoreductase</keyword>
<keyword id="KW-0561">Oxygen transport</keyword>
<keyword id="KW-0597">Phosphoprotein</keyword>
<keyword id="KW-0813">Transport</keyword>
<proteinExistence type="evidence at protein level"/>
<name>MYG_SYMSY</name>
<protein>
    <recommendedName>
        <fullName>Myoglobin</fullName>
    </recommendedName>
    <alternativeName>
        <fullName evidence="1">Nitrite reductase MB</fullName>
        <ecNumber evidence="1">1.7.-.-</ecNumber>
    </alternativeName>
    <alternativeName>
        <fullName evidence="1">Pseudoperoxidase MB</fullName>
        <ecNumber evidence="1">1.11.1.-</ecNumber>
    </alternativeName>
</protein>
<dbReference type="EC" id="1.7.-.-" evidence="1"/>
<dbReference type="EC" id="1.11.1.-" evidence="1"/>
<dbReference type="PIR" id="A61366">
    <property type="entry name" value="A61366"/>
</dbReference>
<dbReference type="SMR" id="P62735"/>
<dbReference type="GO" id="GO:0070062">
    <property type="term" value="C:extracellular exosome"/>
    <property type="evidence" value="ECO:0007669"/>
    <property type="project" value="TreeGrafter"/>
</dbReference>
<dbReference type="GO" id="GO:0016528">
    <property type="term" value="C:sarcoplasm"/>
    <property type="evidence" value="ECO:0000250"/>
    <property type="project" value="UniProtKB"/>
</dbReference>
<dbReference type="GO" id="GO:0020037">
    <property type="term" value="F:heme binding"/>
    <property type="evidence" value="ECO:0007669"/>
    <property type="project" value="InterPro"/>
</dbReference>
<dbReference type="GO" id="GO:0046872">
    <property type="term" value="F:metal ion binding"/>
    <property type="evidence" value="ECO:0007669"/>
    <property type="project" value="UniProtKB-KW"/>
</dbReference>
<dbReference type="GO" id="GO:0098809">
    <property type="term" value="F:nitrite reductase activity"/>
    <property type="evidence" value="ECO:0000250"/>
    <property type="project" value="UniProtKB"/>
</dbReference>
<dbReference type="GO" id="GO:0019825">
    <property type="term" value="F:oxygen binding"/>
    <property type="evidence" value="ECO:0007669"/>
    <property type="project" value="InterPro"/>
</dbReference>
<dbReference type="GO" id="GO:0005344">
    <property type="term" value="F:oxygen carrier activity"/>
    <property type="evidence" value="ECO:0000250"/>
    <property type="project" value="UniProtKB"/>
</dbReference>
<dbReference type="GO" id="GO:0004601">
    <property type="term" value="F:peroxidase activity"/>
    <property type="evidence" value="ECO:0000250"/>
    <property type="project" value="UniProtKB"/>
</dbReference>
<dbReference type="GO" id="GO:0019430">
    <property type="term" value="P:removal of superoxide radicals"/>
    <property type="evidence" value="ECO:0000250"/>
    <property type="project" value="UniProtKB"/>
</dbReference>
<dbReference type="CDD" id="cd08926">
    <property type="entry name" value="Mb"/>
    <property type="match status" value="1"/>
</dbReference>
<dbReference type="Gene3D" id="6.10.140.2100">
    <property type="match status" value="1"/>
</dbReference>
<dbReference type="Gene3D" id="6.10.140.2110">
    <property type="match status" value="1"/>
</dbReference>
<dbReference type="InterPro" id="IPR000971">
    <property type="entry name" value="Globin"/>
</dbReference>
<dbReference type="InterPro" id="IPR009050">
    <property type="entry name" value="Globin-like_sf"/>
</dbReference>
<dbReference type="InterPro" id="IPR002335">
    <property type="entry name" value="Myoglobin"/>
</dbReference>
<dbReference type="PANTHER" id="PTHR47132">
    <property type="entry name" value="MYOGLOBIN"/>
    <property type="match status" value="1"/>
</dbReference>
<dbReference type="PANTHER" id="PTHR47132:SF1">
    <property type="entry name" value="MYOGLOBIN"/>
    <property type="match status" value="1"/>
</dbReference>
<dbReference type="Pfam" id="PF00042">
    <property type="entry name" value="Globin"/>
    <property type="match status" value="1"/>
</dbReference>
<dbReference type="PRINTS" id="PR00613">
    <property type="entry name" value="MYOGLOBIN"/>
</dbReference>
<dbReference type="SUPFAM" id="SSF46458">
    <property type="entry name" value="Globin-like"/>
    <property type="match status" value="1"/>
</dbReference>
<dbReference type="PROSITE" id="PS01033">
    <property type="entry name" value="GLOBIN"/>
    <property type="match status" value="1"/>
</dbReference>
<gene>
    <name type="primary">MB</name>
</gene>
<sequence>MGLSDGEWQLVLNVWGKVEADIPSHGQEVLIRLFKGHPETLEKFDKFKHLKSEDEMKASEDLKKHGATVLTALGGILKKKGHHEAEIKPLAQSHATKHKIPVKYLEFISECIIQVLQSKHPGDFGADAQGAMNKALELFRKDMASNYKELGFQG</sequence>
<accession>P62735</accession>
<accession>P02146</accession>
<comment type="function">
    <text evidence="1">Monomeric heme protein which primary function is to store oxygen and facilitate its diffusion within muscle tissues. Reversibly binds oxygen through a pentacoordinated heme iron and enables its timely and efficient release as needed during periods of heightened demand. Depending on the oxidative conditions of tissues and cells, and in addition to its ability to bind oxygen, it also has a nitrite reductase activity whereby it regulates the production of bioactive nitric oxide. Under stress conditions, like hypoxia and anoxia, it also protects cells against reactive oxygen species thanks to its pseudoperoxidase activity.</text>
</comment>
<comment type="catalytic activity">
    <reaction evidence="1">
        <text>Fe(III)-heme b-[protein] + nitric oxide + H2O = Fe(II)-heme b-[protein] + nitrite + 2 H(+)</text>
        <dbReference type="Rhea" id="RHEA:77711"/>
        <dbReference type="Rhea" id="RHEA-COMP:18975"/>
        <dbReference type="Rhea" id="RHEA-COMP:18976"/>
        <dbReference type="ChEBI" id="CHEBI:15377"/>
        <dbReference type="ChEBI" id="CHEBI:15378"/>
        <dbReference type="ChEBI" id="CHEBI:16301"/>
        <dbReference type="ChEBI" id="CHEBI:16480"/>
        <dbReference type="ChEBI" id="CHEBI:55376"/>
        <dbReference type="ChEBI" id="CHEBI:60344"/>
    </reaction>
    <physiologicalReaction direction="right-to-left" evidence="1">
        <dbReference type="Rhea" id="RHEA:77713"/>
    </physiologicalReaction>
</comment>
<comment type="catalytic activity">
    <reaction evidence="1">
        <text>H2O2 + AH2 = A + 2 H2O</text>
        <dbReference type="Rhea" id="RHEA:30275"/>
        <dbReference type="ChEBI" id="CHEBI:13193"/>
        <dbReference type="ChEBI" id="CHEBI:15377"/>
        <dbReference type="ChEBI" id="CHEBI:16240"/>
        <dbReference type="ChEBI" id="CHEBI:17499"/>
    </reaction>
</comment>
<comment type="subunit">
    <text evidence="2">Monomeric.</text>
</comment>
<comment type="subcellular location">
    <subcellularLocation>
        <location evidence="1">Cytoplasm</location>
        <location evidence="1">Sarcoplasm</location>
    </subcellularLocation>
</comment>
<comment type="similarity">
    <text evidence="7">Belongs to the globin family.</text>
</comment>
<evidence type="ECO:0000250" key="1">
    <source>
        <dbReference type="UniProtKB" id="P02144"/>
    </source>
</evidence>
<evidence type="ECO:0000250" key="2">
    <source>
        <dbReference type="UniProtKB" id="P02185"/>
    </source>
</evidence>
<evidence type="ECO:0000250" key="3">
    <source>
        <dbReference type="UniProtKB" id="P02189"/>
    </source>
</evidence>
<evidence type="ECO:0000250" key="4">
    <source>
        <dbReference type="UniProtKB" id="P04247"/>
    </source>
</evidence>
<evidence type="ECO:0000250" key="5">
    <source>
        <dbReference type="UniProtKB" id="P68082"/>
    </source>
</evidence>
<evidence type="ECO:0000250" key="6">
    <source>
        <dbReference type="UniProtKB" id="Q9QZ76"/>
    </source>
</evidence>
<evidence type="ECO:0000255" key="7">
    <source>
        <dbReference type="PROSITE-ProRule" id="PRU00238"/>
    </source>
</evidence>
<evidence type="ECO:0000269" key="8">
    <source>
    </source>
</evidence>
<reference key="1">
    <citation type="journal article" date="1977" name="FEBS Lett.">
        <title>The myoglobin of primates: Symphalangus syndactylus (siamang).</title>
        <authorList>
            <person name="Bruce E.J."/>
            <person name="Castillo O."/>
            <person name="Lehmann H."/>
        </authorList>
    </citation>
    <scope>PROTEIN SEQUENCE OF 2-154</scope>
</reference>
<organism>
    <name type="scientific">Symphalangus syndactylus</name>
    <name type="common">Siamang</name>
    <name type="synonym">Hylobates syndactylus</name>
    <dbReference type="NCBI Taxonomy" id="9590"/>
    <lineage>
        <taxon>Eukaryota</taxon>
        <taxon>Metazoa</taxon>
        <taxon>Chordata</taxon>
        <taxon>Craniata</taxon>
        <taxon>Vertebrata</taxon>
        <taxon>Euteleostomi</taxon>
        <taxon>Mammalia</taxon>
        <taxon>Eutheria</taxon>
        <taxon>Euarchontoglires</taxon>
        <taxon>Primates</taxon>
        <taxon>Haplorrhini</taxon>
        <taxon>Catarrhini</taxon>
        <taxon>Hylobatidae</taxon>
        <taxon>Symphalangus</taxon>
    </lineage>
</organism>
<feature type="initiator methionine" description="Removed" evidence="8">
    <location>
        <position position="1"/>
    </location>
</feature>
<feature type="chain" id="PRO_0000053305" description="Myoglobin">
    <location>
        <begin position="2"/>
        <end position="154"/>
    </location>
</feature>
<feature type="domain" description="Globin" evidence="7">
    <location>
        <begin position="2"/>
        <end position="148"/>
    </location>
</feature>
<feature type="binding site" evidence="5">
    <location>
        <position position="65"/>
    </location>
    <ligand>
        <name>nitrite</name>
        <dbReference type="ChEBI" id="CHEBI:16301"/>
    </ligand>
</feature>
<feature type="binding site" evidence="3 7">
    <location>
        <position position="65"/>
    </location>
    <ligand>
        <name>O2</name>
        <dbReference type="ChEBI" id="CHEBI:15379"/>
    </ligand>
</feature>
<feature type="binding site" description="proximal binding residue" evidence="1">
    <location>
        <position position="94"/>
    </location>
    <ligand>
        <name>heme b</name>
        <dbReference type="ChEBI" id="CHEBI:60344"/>
    </ligand>
    <ligandPart>
        <name>Fe</name>
        <dbReference type="ChEBI" id="CHEBI:18248"/>
    </ligandPart>
</feature>
<feature type="modified residue" description="Phosphoserine" evidence="6">
    <location>
        <position position="4"/>
    </location>
</feature>
<feature type="modified residue" description="Phosphothreonine" evidence="4">
    <location>
        <position position="68"/>
    </location>
</feature>